<reference key="1">
    <citation type="journal article" date="2003" name="Proc. Natl. Acad. Sci. U.S.A.">
        <title>The complete genome sequence of Mycobacterium bovis.</title>
        <authorList>
            <person name="Garnier T."/>
            <person name="Eiglmeier K."/>
            <person name="Camus J.-C."/>
            <person name="Medina N."/>
            <person name="Mansoor H."/>
            <person name="Pryor M."/>
            <person name="Duthoy S."/>
            <person name="Grondin S."/>
            <person name="Lacroix C."/>
            <person name="Monsempe C."/>
            <person name="Simon S."/>
            <person name="Harris B."/>
            <person name="Atkin R."/>
            <person name="Doggett J."/>
            <person name="Mayes R."/>
            <person name="Keating L."/>
            <person name="Wheeler P.R."/>
            <person name="Parkhill J."/>
            <person name="Barrell B.G."/>
            <person name="Cole S.T."/>
            <person name="Gordon S.V."/>
            <person name="Hewinson R.G."/>
        </authorList>
    </citation>
    <scope>NUCLEOTIDE SEQUENCE [LARGE SCALE GENOMIC DNA]</scope>
    <source>
        <strain>ATCC BAA-935 / AF2122/97</strain>
    </source>
</reference>
<reference key="2">
    <citation type="journal article" date="2017" name="Genome Announc.">
        <title>Updated reference genome sequence and annotation of Mycobacterium bovis AF2122/97.</title>
        <authorList>
            <person name="Malone K.M."/>
            <person name="Farrell D."/>
            <person name="Stuber T.P."/>
            <person name="Schubert O.T."/>
            <person name="Aebersold R."/>
            <person name="Robbe-Austerman S."/>
            <person name="Gordon S.V."/>
        </authorList>
    </citation>
    <scope>NUCLEOTIDE SEQUENCE [LARGE SCALE GENOMIC DNA]</scope>
    <scope>GENOME REANNOTATION</scope>
    <source>
        <strain>ATCC BAA-935 / AF2122/97</strain>
    </source>
</reference>
<gene>
    <name type="primary">fadE10</name>
    <name type="ordered locus">BQ2027_MB0897</name>
</gene>
<evidence type="ECO:0000250" key="1"/>
<evidence type="ECO:0000256" key="2">
    <source>
        <dbReference type="SAM" id="MobiDB-lite"/>
    </source>
</evidence>
<evidence type="ECO:0000305" key="3"/>
<accession>P63430</accession>
<accession>A0A1R3XX23</accession>
<accession>O53885</accession>
<accession>Q10535</accession>
<accession>X2BGE3</accession>
<feature type="chain" id="PRO_0000201210" description="Probable acyl-CoA dehydrogenase FadE10">
    <location>
        <begin position="1"/>
        <end position="650"/>
    </location>
</feature>
<feature type="region of interest" description="Disordered" evidence="2">
    <location>
        <begin position="1"/>
        <end position="23"/>
    </location>
</feature>
<feature type="compositionally biased region" description="Basic and acidic residues" evidence="2">
    <location>
        <begin position="10"/>
        <end position="23"/>
    </location>
</feature>
<feature type="active site" description="Proton acceptor" evidence="1">
    <location>
        <position position="422"/>
    </location>
</feature>
<comment type="catalytic activity">
    <reaction>
        <text>a 2,3-saturated acyl-CoA + A = a 2,3-dehydroacyl-CoA + AH2</text>
        <dbReference type="Rhea" id="RHEA:48608"/>
        <dbReference type="ChEBI" id="CHEBI:13193"/>
        <dbReference type="ChEBI" id="CHEBI:17499"/>
        <dbReference type="ChEBI" id="CHEBI:60015"/>
        <dbReference type="ChEBI" id="CHEBI:65111"/>
    </reaction>
</comment>
<comment type="cofactor">
    <cofactor evidence="1">
        <name>FAD</name>
        <dbReference type="ChEBI" id="CHEBI:57692"/>
    </cofactor>
</comment>
<comment type="similarity">
    <text evidence="3">Belongs to the acyl-CoA dehydrogenase family.</text>
</comment>
<name>Y897_MYCBO</name>
<organism>
    <name type="scientific">Mycobacterium bovis (strain ATCC BAA-935 / AF2122/97)</name>
    <dbReference type="NCBI Taxonomy" id="233413"/>
    <lineage>
        <taxon>Bacteria</taxon>
        <taxon>Bacillati</taxon>
        <taxon>Actinomycetota</taxon>
        <taxon>Actinomycetes</taxon>
        <taxon>Mycobacteriales</taxon>
        <taxon>Mycobacteriaceae</taxon>
        <taxon>Mycobacterium</taxon>
        <taxon>Mycobacterium tuberculosis complex</taxon>
    </lineage>
</organism>
<protein>
    <recommendedName>
        <fullName>Probable acyl-CoA dehydrogenase FadE10</fullName>
        <ecNumber>1.3.-.-</ecNumber>
    </recommendedName>
</protein>
<sequence>MAQQTQVTEEQARALAEESRESGWDKPSFAKELFLGRFPLGLIHPFPKPSDAEEARTEAFLVKLREFLDTVDGSVIERAAQIPDEYVKGLAELGCFGLKIPSEYGGLNMSQVAYNRVLMMVTTVHSSLGALLSAHQSIGVPEPLKLAGTAEQKRRFLPRCAAGAISAFLLTEPDVGSDPARMASTATPIDDGQAYELEGVKLWTTNGVVADLLVVMARVPRSEGHRGGISAFVVEADSPGITVERRNKFMGLRGIENGVTRLHRVRVPKDNLIGREGDGLKIALTTLNAGRLSLPAIATGVAKQALKIAREWSVERVQWGKPVGQHEAVASKISFIAATNYALDAVVELSSQMADEGRNDIRIEAALAKLWSSEMACLVGDELLQIRGGRGYETAESLAARGERAVPVEQMVRDLRINRIFEGSSEIMRLLIAREAVDAHLTAAGDLANPKADLRQKAAAAAGASGFYAKWLPKLVFGEGQLPTTYREFGALATHLRFVERSSRKLARNTFYGMARWQASLEKKQGFLGRIVDIGAELFAISAACVRAEAQRTADPVEGEQAYELAEAFCQQATLRVEALFDALWSNTDSIDVRLANDVLEGRYTWLEQGILDQSEGTGPWIASWEPGPSTEANLARRFLTVSPSSEAKL</sequence>
<proteinExistence type="inferred from homology"/>
<dbReference type="EC" id="1.3.-.-"/>
<dbReference type="EMBL" id="LT708304">
    <property type="protein sequence ID" value="SIT99495.1"/>
    <property type="molecule type" value="Genomic_DNA"/>
</dbReference>
<dbReference type="RefSeq" id="NP_854554.1">
    <property type="nucleotide sequence ID" value="NC_002945.3"/>
</dbReference>
<dbReference type="RefSeq" id="WP_003898626.1">
    <property type="nucleotide sequence ID" value="NC_002945.4"/>
</dbReference>
<dbReference type="SMR" id="P63430"/>
<dbReference type="KEGG" id="mbo:BQ2027_MB0897"/>
<dbReference type="PATRIC" id="fig|233413.5.peg.976"/>
<dbReference type="Proteomes" id="UP000001419">
    <property type="component" value="Chromosome"/>
</dbReference>
<dbReference type="GO" id="GO:0005737">
    <property type="term" value="C:cytoplasm"/>
    <property type="evidence" value="ECO:0007669"/>
    <property type="project" value="TreeGrafter"/>
</dbReference>
<dbReference type="GO" id="GO:0003995">
    <property type="term" value="F:acyl-CoA dehydrogenase activity"/>
    <property type="evidence" value="ECO:0007669"/>
    <property type="project" value="TreeGrafter"/>
</dbReference>
<dbReference type="GO" id="GO:0050660">
    <property type="term" value="F:flavin adenine dinucleotide binding"/>
    <property type="evidence" value="ECO:0007669"/>
    <property type="project" value="InterPro"/>
</dbReference>
<dbReference type="GO" id="GO:0033539">
    <property type="term" value="P:fatty acid beta-oxidation using acyl-CoA dehydrogenase"/>
    <property type="evidence" value="ECO:0007669"/>
    <property type="project" value="TreeGrafter"/>
</dbReference>
<dbReference type="FunFam" id="1.20.140.10:FF:000019">
    <property type="entry name" value="Acyl-CoA dehydrogenase"/>
    <property type="match status" value="1"/>
</dbReference>
<dbReference type="FunFam" id="1.20.140.10:FF:000042">
    <property type="entry name" value="Acyl-CoA dehydrogenase FadE10"/>
    <property type="match status" value="1"/>
</dbReference>
<dbReference type="FunFam" id="2.40.110.10:FF:000023">
    <property type="entry name" value="Acyl-CoA dehydrogenase FadE10"/>
    <property type="match status" value="1"/>
</dbReference>
<dbReference type="FunFam" id="1.10.540.10:FF:000001">
    <property type="entry name" value="Very long-chain-specific acyl-CoA dehydrogenase, mitochondrial"/>
    <property type="match status" value="1"/>
</dbReference>
<dbReference type="Gene3D" id="1.10.540.10">
    <property type="entry name" value="Acyl-CoA dehydrogenase/oxidase, N-terminal domain"/>
    <property type="match status" value="1"/>
</dbReference>
<dbReference type="Gene3D" id="2.40.110.10">
    <property type="entry name" value="Butyryl-CoA Dehydrogenase, subunit A, domain 2"/>
    <property type="match status" value="1"/>
</dbReference>
<dbReference type="Gene3D" id="1.20.140.10">
    <property type="entry name" value="Butyryl-CoA Dehydrogenase, subunit A, domain 3"/>
    <property type="match status" value="2"/>
</dbReference>
<dbReference type="InterPro" id="IPR050741">
    <property type="entry name" value="Acyl-CoA_dehydrogenase"/>
</dbReference>
<dbReference type="InterPro" id="IPR006091">
    <property type="entry name" value="Acyl-CoA_Oxase/DH_mid-dom"/>
</dbReference>
<dbReference type="InterPro" id="IPR046373">
    <property type="entry name" value="Acyl-CoA_Oxase/DH_mid-dom_sf"/>
</dbReference>
<dbReference type="InterPro" id="IPR036250">
    <property type="entry name" value="AcylCo_DH-like_C"/>
</dbReference>
<dbReference type="InterPro" id="IPR009075">
    <property type="entry name" value="AcylCo_DH/oxidase_C"/>
</dbReference>
<dbReference type="InterPro" id="IPR013786">
    <property type="entry name" value="AcylCoA_DH/ox_N"/>
</dbReference>
<dbReference type="InterPro" id="IPR037069">
    <property type="entry name" value="AcylCoA_DH/ox_N_sf"/>
</dbReference>
<dbReference type="InterPro" id="IPR009100">
    <property type="entry name" value="AcylCoA_DH/oxidase_NM_dom_sf"/>
</dbReference>
<dbReference type="PANTHER" id="PTHR48083:SF31">
    <property type="entry name" value="ACYL-COA DEHYDROGENASE FADE10-RELATED"/>
    <property type="match status" value="1"/>
</dbReference>
<dbReference type="PANTHER" id="PTHR48083">
    <property type="entry name" value="MEDIUM-CHAIN SPECIFIC ACYL-COA DEHYDROGENASE, MITOCHONDRIAL-RELATED"/>
    <property type="match status" value="1"/>
</dbReference>
<dbReference type="Pfam" id="PF00441">
    <property type="entry name" value="Acyl-CoA_dh_1"/>
    <property type="match status" value="1"/>
</dbReference>
<dbReference type="Pfam" id="PF02770">
    <property type="entry name" value="Acyl-CoA_dh_M"/>
    <property type="match status" value="1"/>
</dbReference>
<dbReference type="Pfam" id="PF02771">
    <property type="entry name" value="Acyl-CoA_dh_N"/>
    <property type="match status" value="1"/>
</dbReference>
<dbReference type="SUPFAM" id="SSF47203">
    <property type="entry name" value="Acyl-CoA dehydrogenase C-terminal domain-like"/>
    <property type="match status" value="1"/>
</dbReference>
<dbReference type="SUPFAM" id="SSF56645">
    <property type="entry name" value="Acyl-CoA dehydrogenase NM domain-like"/>
    <property type="match status" value="1"/>
</dbReference>
<keyword id="KW-0274">FAD</keyword>
<keyword id="KW-0285">Flavoprotein</keyword>
<keyword id="KW-0560">Oxidoreductase</keyword>
<keyword id="KW-1185">Reference proteome</keyword>